<feature type="chain" id="PRO_1000117242" description="Peptide chain release factor 1">
    <location>
        <begin position="1"/>
        <end position="360"/>
    </location>
</feature>
<feature type="region of interest" description="Disordered" evidence="2">
    <location>
        <begin position="284"/>
        <end position="313"/>
    </location>
</feature>
<feature type="modified residue" description="N5-methylglutamine" evidence="1">
    <location>
        <position position="235"/>
    </location>
</feature>
<keyword id="KW-0963">Cytoplasm</keyword>
<keyword id="KW-0488">Methylation</keyword>
<keyword id="KW-0648">Protein biosynthesis</keyword>
<gene>
    <name evidence="1" type="primary">prfA</name>
    <name type="ordered locus">EcSMS35_1931</name>
</gene>
<dbReference type="EMBL" id="CP000970">
    <property type="protein sequence ID" value="ACB18526.1"/>
    <property type="molecule type" value="Genomic_DNA"/>
</dbReference>
<dbReference type="RefSeq" id="WP_000804726.1">
    <property type="nucleotide sequence ID" value="NC_010498.1"/>
</dbReference>
<dbReference type="SMR" id="B1LH89"/>
<dbReference type="GeneID" id="93775276"/>
<dbReference type="KEGG" id="ecm:EcSMS35_1931"/>
<dbReference type="HOGENOM" id="CLU_036856_0_1_6"/>
<dbReference type="Proteomes" id="UP000007011">
    <property type="component" value="Chromosome"/>
</dbReference>
<dbReference type="GO" id="GO:0005737">
    <property type="term" value="C:cytoplasm"/>
    <property type="evidence" value="ECO:0007669"/>
    <property type="project" value="UniProtKB-SubCell"/>
</dbReference>
<dbReference type="GO" id="GO:0016149">
    <property type="term" value="F:translation release factor activity, codon specific"/>
    <property type="evidence" value="ECO:0007669"/>
    <property type="project" value="UniProtKB-UniRule"/>
</dbReference>
<dbReference type="FunFam" id="3.30.160.20:FF:000004">
    <property type="entry name" value="Peptide chain release factor 1"/>
    <property type="match status" value="1"/>
</dbReference>
<dbReference type="FunFam" id="3.30.70.1660:FF:000002">
    <property type="entry name" value="Peptide chain release factor 1"/>
    <property type="match status" value="1"/>
</dbReference>
<dbReference type="FunFam" id="3.30.70.1660:FF:000004">
    <property type="entry name" value="Peptide chain release factor 1"/>
    <property type="match status" value="1"/>
</dbReference>
<dbReference type="Gene3D" id="3.30.160.20">
    <property type="match status" value="1"/>
</dbReference>
<dbReference type="Gene3D" id="3.30.70.1660">
    <property type="match status" value="1"/>
</dbReference>
<dbReference type="Gene3D" id="6.10.140.1950">
    <property type="match status" value="1"/>
</dbReference>
<dbReference type="HAMAP" id="MF_00093">
    <property type="entry name" value="Rel_fac_1"/>
    <property type="match status" value="1"/>
</dbReference>
<dbReference type="InterPro" id="IPR005139">
    <property type="entry name" value="PCRF"/>
</dbReference>
<dbReference type="InterPro" id="IPR000352">
    <property type="entry name" value="Pep_chain_release_fac_I"/>
</dbReference>
<dbReference type="InterPro" id="IPR045853">
    <property type="entry name" value="Pep_chain_release_fac_I_sf"/>
</dbReference>
<dbReference type="InterPro" id="IPR050057">
    <property type="entry name" value="Prokaryotic/Mito_RF"/>
</dbReference>
<dbReference type="InterPro" id="IPR004373">
    <property type="entry name" value="RF-1"/>
</dbReference>
<dbReference type="NCBIfam" id="TIGR00019">
    <property type="entry name" value="prfA"/>
    <property type="match status" value="1"/>
</dbReference>
<dbReference type="NCBIfam" id="NF001859">
    <property type="entry name" value="PRK00591.1"/>
    <property type="match status" value="1"/>
</dbReference>
<dbReference type="PANTHER" id="PTHR43804">
    <property type="entry name" value="LD18447P"/>
    <property type="match status" value="1"/>
</dbReference>
<dbReference type="PANTHER" id="PTHR43804:SF7">
    <property type="entry name" value="LD18447P"/>
    <property type="match status" value="1"/>
</dbReference>
<dbReference type="Pfam" id="PF03462">
    <property type="entry name" value="PCRF"/>
    <property type="match status" value="1"/>
</dbReference>
<dbReference type="Pfam" id="PF00472">
    <property type="entry name" value="RF-1"/>
    <property type="match status" value="1"/>
</dbReference>
<dbReference type="SMART" id="SM00937">
    <property type="entry name" value="PCRF"/>
    <property type="match status" value="1"/>
</dbReference>
<dbReference type="SUPFAM" id="SSF75620">
    <property type="entry name" value="Release factor"/>
    <property type="match status" value="1"/>
</dbReference>
<dbReference type="PROSITE" id="PS00745">
    <property type="entry name" value="RF_PROK_I"/>
    <property type="match status" value="1"/>
</dbReference>
<reference key="1">
    <citation type="journal article" date="2008" name="J. Bacteriol.">
        <title>Insights into the environmental resistance gene pool from the genome sequence of the multidrug-resistant environmental isolate Escherichia coli SMS-3-5.</title>
        <authorList>
            <person name="Fricke W.F."/>
            <person name="Wright M.S."/>
            <person name="Lindell A.H."/>
            <person name="Harkins D.M."/>
            <person name="Baker-Austin C."/>
            <person name="Ravel J."/>
            <person name="Stepanauskas R."/>
        </authorList>
    </citation>
    <scope>NUCLEOTIDE SEQUENCE [LARGE SCALE GENOMIC DNA]</scope>
    <source>
        <strain>SMS-3-5 / SECEC</strain>
    </source>
</reference>
<comment type="function">
    <text evidence="1">Peptide chain release factor 1 directs the termination of translation in response to the peptide chain termination codons UAG and UAA.</text>
</comment>
<comment type="subcellular location">
    <subcellularLocation>
        <location evidence="1">Cytoplasm</location>
    </subcellularLocation>
</comment>
<comment type="PTM">
    <text evidence="1">Methylated by PrmC. Methylation increases the termination efficiency of RF1.</text>
</comment>
<comment type="similarity">
    <text evidence="1">Belongs to the prokaryotic/mitochondrial release factor family.</text>
</comment>
<name>RF1_ECOSM</name>
<proteinExistence type="inferred from homology"/>
<sequence>MKPSIVAKLEALHERHEEVQALLGDAQTIADQERFRALSREYAQLSDVSRCFTDWQQVQEDIETAQMMLDDPEMREMAQDELREAKEKSEQLEQQLQVLLLPKDPDDERNAFLEVRAGTGGDEAALFAGDLFRMYSRYAEARRWRVEIMSASEGEHGGYKEIIAKISGDGVYGRLKFESGGHRVQRVPATESQGRIHTSACTVAVMPELPDAELPDINPADLRIDTFRSSGAGGQHVNTTDSAIRITHLPTGIVVECQDERSQHKNKAKALSVLGARIHAAEMAKRQQAEASTRRNLLGSGDRSDRNRTYNFPQGRVTDHRINLTLYRLDEVMEGKLDMLIEPIIQEHQADQLAALSEQE</sequence>
<organism>
    <name type="scientific">Escherichia coli (strain SMS-3-5 / SECEC)</name>
    <dbReference type="NCBI Taxonomy" id="439855"/>
    <lineage>
        <taxon>Bacteria</taxon>
        <taxon>Pseudomonadati</taxon>
        <taxon>Pseudomonadota</taxon>
        <taxon>Gammaproteobacteria</taxon>
        <taxon>Enterobacterales</taxon>
        <taxon>Enterobacteriaceae</taxon>
        <taxon>Escherichia</taxon>
    </lineage>
</organism>
<protein>
    <recommendedName>
        <fullName evidence="1">Peptide chain release factor 1</fullName>
        <shortName evidence="1">RF-1</shortName>
    </recommendedName>
</protein>
<evidence type="ECO:0000255" key="1">
    <source>
        <dbReference type="HAMAP-Rule" id="MF_00093"/>
    </source>
</evidence>
<evidence type="ECO:0000256" key="2">
    <source>
        <dbReference type="SAM" id="MobiDB-lite"/>
    </source>
</evidence>
<accession>B1LH89</accession>